<proteinExistence type="inferred from homology"/>
<evidence type="ECO:0000255" key="1">
    <source>
        <dbReference type="HAMAP-Rule" id="MF_00757"/>
    </source>
</evidence>
<keyword id="KW-0963">Cytoplasm</keyword>
<keyword id="KW-0255">Endonuclease</keyword>
<keyword id="KW-0378">Hydrolase</keyword>
<keyword id="KW-0479">Metal-binding</keyword>
<keyword id="KW-0540">Nuclease</keyword>
<keyword id="KW-1185">Reference proteome</keyword>
<keyword id="KW-0819">tRNA processing</keyword>
<keyword id="KW-0862">Zinc</keyword>
<reference key="1">
    <citation type="journal article" date="2009" name="Appl. Environ. Microbiol.">
        <title>Metabolic versatility and indigenous origin of the archaeon Thermococcus sibiricus, isolated from a siberian oil reservoir, as revealed by genome analysis.</title>
        <authorList>
            <person name="Mardanov A.V."/>
            <person name="Ravin N.V."/>
            <person name="Svetlitchnyi V.A."/>
            <person name="Beletsky A.V."/>
            <person name="Miroshnichenko M.L."/>
            <person name="Bonch-Osmolovskaya E.A."/>
            <person name="Skryabin K.G."/>
        </authorList>
    </citation>
    <scope>NUCLEOTIDE SEQUENCE [LARGE SCALE GENOMIC DNA]</scope>
    <source>
        <strain>DSM 12597 / MM 739</strain>
    </source>
</reference>
<feature type="chain" id="PRO_1000212868" description="Ribonuclease P protein component 4">
    <location>
        <begin position="1"/>
        <end position="120"/>
    </location>
</feature>
<feature type="binding site" evidence="1">
    <location>
        <position position="67"/>
    </location>
    <ligand>
        <name>Zn(2+)</name>
        <dbReference type="ChEBI" id="CHEBI:29105"/>
    </ligand>
</feature>
<feature type="binding site" evidence="1">
    <location>
        <position position="70"/>
    </location>
    <ligand>
        <name>Zn(2+)</name>
        <dbReference type="ChEBI" id="CHEBI:29105"/>
    </ligand>
</feature>
<feature type="binding site" evidence="1">
    <location>
        <position position="96"/>
    </location>
    <ligand>
        <name>Zn(2+)</name>
        <dbReference type="ChEBI" id="CHEBI:29105"/>
    </ligand>
</feature>
<feature type="binding site" evidence="1">
    <location>
        <position position="99"/>
    </location>
    <ligand>
        <name>Zn(2+)</name>
        <dbReference type="ChEBI" id="CHEBI:29105"/>
    </ligand>
</feature>
<protein>
    <recommendedName>
        <fullName evidence="1">Ribonuclease P protein component 4</fullName>
        <shortName evidence="1">RNase P component 4</shortName>
        <ecNumber evidence="1">3.1.26.5</ecNumber>
    </recommendedName>
    <alternativeName>
        <fullName evidence="1">Rpp21</fullName>
    </alternativeName>
</protein>
<accession>C6A4A4</accession>
<organism>
    <name type="scientific">Thermococcus sibiricus (strain DSM 12597 / MM 739)</name>
    <dbReference type="NCBI Taxonomy" id="604354"/>
    <lineage>
        <taxon>Archaea</taxon>
        <taxon>Methanobacteriati</taxon>
        <taxon>Methanobacteriota</taxon>
        <taxon>Thermococci</taxon>
        <taxon>Thermococcales</taxon>
        <taxon>Thermococcaceae</taxon>
        <taxon>Thermococcus</taxon>
    </lineage>
</organism>
<name>RNP4_THESM</name>
<sequence length="120" mass="14701">MSKKFSRRKEQREKKKIALERIDILFNLAERVFAYDKELANRYVEIALAVQQKAKVRMPRKWKRRYCKKCHSFLVPGVNARVRLRQKRMPHVVIKCLECGHIMRYPYLREKKERRKAKKQ</sequence>
<gene>
    <name evidence="1" type="primary">rnp4</name>
    <name type="ordered locus">TSIB_1398</name>
</gene>
<dbReference type="EC" id="3.1.26.5" evidence="1"/>
<dbReference type="EMBL" id="CP001463">
    <property type="protein sequence ID" value="ACS90449.1"/>
    <property type="molecule type" value="Genomic_DNA"/>
</dbReference>
<dbReference type="RefSeq" id="WP_015849667.1">
    <property type="nucleotide sequence ID" value="NC_012883.1"/>
</dbReference>
<dbReference type="SMR" id="C6A4A4"/>
<dbReference type="STRING" id="604354.TSIB_1398"/>
<dbReference type="GeneID" id="8096400"/>
<dbReference type="KEGG" id="tsi:TSIB_1398"/>
<dbReference type="eggNOG" id="arCOG04345">
    <property type="taxonomic scope" value="Archaea"/>
</dbReference>
<dbReference type="HOGENOM" id="CLU_079140_3_1_2"/>
<dbReference type="OrthoDB" id="10058at2157"/>
<dbReference type="Proteomes" id="UP000009079">
    <property type="component" value="Chromosome"/>
</dbReference>
<dbReference type="GO" id="GO:0005737">
    <property type="term" value="C:cytoplasm"/>
    <property type="evidence" value="ECO:0007669"/>
    <property type="project" value="UniProtKB-SubCell"/>
</dbReference>
<dbReference type="GO" id="GO:0030677">
    <property type="term" value="C:ribonuclease P complex"/>
    <property type="evidence" value="ECO:0007669"/>
    <property type="project" value="UniProtKB-UniRule"/>
</dbReference>
<dbReference type="GO" id="GO:0004526">
    <property type="term" value="F:ribonuclease P activity"/>
    <property type="evidence" value="ECO:0007669"/>
    <property type="project" value="UniProtKB-UniRule"/>
</dbReference>
<dbReference type="GO" id="GO:0008270">
    <property type="term" value="F:zinc ion binding"/>
    <property type="evidence" value="ECO:0007669"/>
    <property type="project" value="UniProtKB-UniRule"/>
</dbReference>
<dbReference type="GO" id="GO:0001682">
    <property type="term" value="P:tRNA 5'-leader removal"/>
    <property type="evidence" value="ECO:0007669"/>
    <property type="project" value="UniProtKB-UniRule"/>
</dbReference>
<dbReference type="Gene3D" id="6.20.50.20">
    <property type="match status" value="1"/>
</dbReference>
<dbReference type="Gene3D" id="1.20.5.420">
    <property type="entry name" value="Immunoglobulin FC, subunit C"/>
    <property type="match status" value="1"/>
</dbReference>
<dbReference type="HAMAP" id="MF_00757">
    <property type="entry name" value="RNase_P_4"/>
    <property type="match status" value="1"/>
</dbReference>
<dbReference type="InterPro" id="IPR016432">
    <property type="entry name" value="RNP4"/>
</dbReference>
<dbReference type="InterPro" id="IPR007175">
    <property type="entry name" value="Rpr2/Snm1/Rpp21"/>
</dbReference>
<dbReference type="NCBIfam" id="NF003045">
    <property type="entry name" value="PRK03954.1"/>
    <property type="match status" value="1"/>
</dbReference>
<dbReference type="PANTHER" id="PTHR14742:SF0">
    <property type="entry name" value="RIBONUCLEASE P PROTEIN SUBUNIT P21"/>
    <property type="match status" value="1"/>
</dbReference>
<dbReference type="PANTHER" id="PTHR14742">
    <property type="entry name" value="RIBONUCLEASE P SUBUNIT P21"/>
    <property type="match status" value="1"/>
</dbReference>
<dbReference type="Pfam" id="PF04032">
    <property type="entry name" value="Rpr2"/>
    <property type="match status" value="1"/>
</dbReference>
<dbReference type="PIRSF" id="PIRSF004878">
    <property type="entry name" value="RNase_P_4"/>
    <property type="match status" value="1"/>
</dbReference>
<comment type="function">
    <text evidence="1">Part of ribonuclease P, a protein complex that generates mature tRNA molecules by cleaving their 5'-ends.</text>
</comment>
<comment type="catalytic activity">
    <reaction evidence="1">
        <text>Endonucleolytic cleavage of RNA, removing 5'-extranucleotides from tRNA precursor.</text>
        <dbReference type="EC" id="3.1.26.5"/>
    </reaction>
</comment>
<comment type="cofactor">
    <cofactor evidence="1">
        <name>Zn(2+)</name>
        <dbReference type="ChEBI" id="CHEBI:29105"/>
    </cofactor>
    <text evidence="1">Binds 1 zinc ion per subunit.</text>
</comment>
<comment type="subunit">
    <text evidence="1">Consists of a catalytic RNA component and at least 4-5 protein subunits.</text>
</comment>
<comment type="subcellular location">
    <subcellularLocation>
        <location evidence="1">Cytoplasm</location>
    </subcellularLocation>
</comment>
<comment type="similarity">
    <text evidence="1">Belongs to the eukaryotic/archaeal RNase P protein component 4 family.</text>
</comment>